<comment type="function">
    <text evidence="1">Catalyzes the attachment of threonine to tRNA(Thr) in a two-step reaction: L-threonine is first activated by ATP to form Thr-AMP and then transferred to the acceptor end of tRNA(Thr). Also edits incorrectly charged L-seryl-tRNA(Thr).</text>
</comment>
<comment type="catalytic activity">
    <reaction evidence="1">
        <text>tRNA(Thr) + L-threonine + ATP = L-threonyl-tRNA(Thr) + AMP + diphosphate + H(+)</text>
        <dbReference type="Rhea" id="RHEA:24624"/>
        <dbReference type="Rhea" id="RHEA-COMP:9670"/>
        <dbReference type="Rhea" id="RHEA-COMP:9704"/>
        <dbReference type="ChEBI" id="CHEBI:15378"/>
        <dbReference type="ChEBI" id="CHEBI:30616"/>
        <dbReference type="ChEBI" id="CHEBI:33019"/>
        <dbReference type="ChEBI" id="CHEBI:57926"/>
        <dbReference type="ChEBI" id="CHEBI:78442"/>
        <dbReference type="ChEBI" id="CHEBI:78534"/>
        <dbReference type="ChEBI" id="CHEBI:456215"/>
        <dbReference type="EC" id="6.1.1.3"/>
    </reaction>
</comment>
<comment type="cofactor">
    <cofactor evidence="1">
        <name>Zn(2+)</name>
        <dbReference type="ChEBI" id="CHEBI:29105"/>
    </cofactor>
    <text evidence="1">Binds 1 zinc ion per subunit.</text>
</comment>
<comment type="subunit">
    <text evidence="1">Homodimer.</text>
</comment>
<comment type="subcellular location">
    <subcellularLocation>
        <location evidence="1">Cytoplasm</location>
    </subcellularLocation>
</comment>
<comment type="similarity">
    <text evidence="1">Belongs to the class-II aminoacyl-tRNA synthetase family.</text>
</comment>
<reference key="1">
    <citation type="submission" date="2008-07" db="EMBL/GenBank/DDBJ databases">
        <title>Complete sequence of Geobacter bemidjiensis BEM.</title>
        <authorList>
            <consortium name="US DOE Joint Genome Institute"/>
            <person name="Lucas S."/>
            <person name="Copeland A."/>
            <person name="Lapidus A."/>
            <person name="Glavina del Rio T."/>
            <person name="Dalin E."/>
            <person name="Tice H."/>
            <person name="Bruce D."/>
            <person name="Goodwin L."/>
            <person name="Pitluck S."/>
            <person name="Kiss H."/>
            <person name="Brettin T."/>
            <person name="Detter J.C."/>
            <person name="Han C."/>
            <person name="Kuske C.R."/>
            <person name="Schmutz J."/>
            <person name="Larimer F."/>
            <person name="Land M."/>
            <person name="Hauser L."/>
            <person name="Kyrpides N."/>
            <person name="Lykidis A."/>
            <person name="Lovley D."/>
            <person name="Richardson P."/>
        </authorList>
    </citation>
    <scope>NUCLEOTIDE SEQUENCE [LARGE SCALE GENOMIC DNA]</scope>
    <source>
        <strain>ATCC BAA-1014 / DSM 16622 / JCM 12645 / Bem</strain>
    </source>
</reference>
<protein>
    <recommendedName>
        <fullName evidence="1">Threonine--tRNA ligase</fullName>
        <ecNumber evidence="1">6.1.1.3</ecNumber>
    </recommendedName>
    <alternativeName>
        <fullName evidence="1">Threonyl-tRNA synthetase</fullName>
        <shortName evidence="1">ThrRS</shortName>
    </alternativeName>
</protein>
<evidence type="ECO:0000255" key="1">
    <source>
        <dbReference type="HAMAP-Rule" id="MF_00184"/>
    </source>
</evidence>
<evidence type="ECO:0000255" key="2">
    <source>
        <dbReference type="PROSITE-ProRule" id="PRU01228"/>
    </source>
</evidence>
<dbReference type="EC" id="6.1.1.3" evidence="1"/>
<dbReference type="EMBL" id="CP001124">
    <property type="protein sequence ID" value="ACH39003.1"/>
    <property type="molecule type" value="Genomic_DNA"/>
</dbReference>
<dbReference type="RefSeq" id="WP_012530422.1">
    <property type="nucleotide sequence ID" value="NC_011146.1"/>
</dbReference>
<dbReference type="SMR" id="B5EBX9"/>
<dbReference type="STRING" id="404380.Gbem_1990"/>
<dbReference type="KEGG" id="gbm:Gbem_1990"/>
<dbReference type="eggNOG" id="COG0441">
    <property type="taxonomic scope" value="Bacteria"/>
</dbReference>
<dbReference type="HOGENOM" id="CLU_008554_0_1_7"/>
<dbReference type="OrthoDB" id="9802304at2"/>
<dbReference type="Proteomes" id="UP000008825">
    <property type="component" value="Chromosome"/>
</dbReference>
<dbReference type="GO" id="GO:0005829">
    <property type="term" value="C:cytosol"/>
    <property type="evidence" value="ECO:0007669"/>
    <property type="project" value="TreeGrafter"/>
</dbReference>
<dbReference type="GO" id="GO:0005524">
    <property type="term" value="F:ATP binding"/>
    <property type="evidence" value="ECO:0007669"/>
    <property type="project" value="UniProtKB-UniRule"/>
</dbReference>
<dbReference type="GO" id="GO:0046872">
    <property type="term" value="F:metal ion binding"/>
    <property type="evidence" value="ECO:0007669"/>
    <property type="project" value="UniProtKB-KW"/>
</dbReference>
<dbReference type="GO" id="GO:0004829">
    <property type="term" value="F:threonine-tRNA ligase activity"/>
    <property type="evidence" value="ECO:0007669"/>
    <property type="project" value="UniProtKB-UniRule"/>
</dbReference>
<dbReference type="GO" id="GO:0000049">
    <property type="term" value="F:tRNA binding"/>
    <property type="evidence" value="ECO:0007669"/>
    <property type="project" value="UniProtKB-KW"/>
</dbReference>
<dbReference type="GO" id="GO:0006435">
    <property type="term" value="P:threonyl-tRNA aminoacylation"/>
    <property type="evidence" value="ECO:0007669"/>
    <property type="project" value="UniProtKB-UniRule"/>
</dbReference>
<dbReference type="CDD" id="cd01667">
    <property type="entry name" value="TGS_ThrRS"/>
    <property type="match status" value="1"/>
</dbReference>
<dbReference type="CDD" id="cd00860">
    <property type="entry name" value="ThrRS_anticodon"/>
    <property type="match status" value="1"/>
</dbReference>
<dbReference type="CDD" id="cd00771">
    <property type="entry name" value="ThrRS_core"/>
    <property type="match status" value="1"/>
</dbReference>
<dbReference type="FunFam" id="3.10.20.30:FF:000005">
    <property type="entry name" value="Threonine--tRNA ligase"/>
    <property type="match status" value="1"/>
</dbReference>
<dbReference type="FunFam" id="3.30.54.20:FF:000002">
    <property type="entry name" value="Threonine--tRNA ligase"/>
    <property type="match status" value="1"/>
</dbReference>
<dbReference type="FunFam" id="3.30.930.10:FF:000002">
    <property type="entry name" value="Threonine--tRNA ligase"/>
    <property type="match status" value="1"/>
</dbReference>
<dbReference type="FunFam" id="3.40.50.800:FF:000001">
    <property type="entry name" value="Threonine--tRNA ligase"/>
    <property type="match status" value="1"/>
</dbReference>
<dbReference type="FunFam" id="3.30.980.10:FF:000005">
    <property type="entry name" value="Threonyl-tRNA synthetase, mitochondrial"/>
    <property type="match status" value="1"/>
</dbReference>
<dbReference type="Gene3D" id="3.10.20.30">
    <property type="match status" value="1"/>
</dbReference>
<dbReference type="Gene3D" id="3.30.54.20">
    <property type="match status" value="1"/>
</dbReference>
<dbReference type="Gene3D" id="3.40.50.800">
    <property type="entry name" value="Anticodon-binding domain"/>
    <property type="match status" value="1"/>
</dbReference>
<dbReference type="Gene3D" id="3.30.930.10">
    <property type="entry name" value="Bira Bifunctional Protein, Domain 2"/>
    <property type="match status" value="1"/>
</dbReference>
<dbReference type="Gene3D" id="3.30.980.10">
    <property type="entry name" value="Threonyl-trna Synthetase, Chain A, domain 2"/>
    <property type="match status" value="1"/>
</dbReference>
<dbReference type="HAMAP" id="MF_00184">
    <property type="entry name" value="Thr_tRNA_synth"/>
    <property type="match status" value="1"/>
</dbReference>
<dbReference type="InterPro" id="IPR002314">
    <property type="entry name" value="aa-tRNA-synt_IIb"/>
</dbReference>
<dbReference type="InterPro" id="IPR006195">
    <property type="entry name" value="aa-tRNA-synth_II"/>
</dbReference>
<dbReference type="InterPro" id="IPR045864">
    <property type="entry name" value="aa-tRNA-synth_II/BPL/LPL"/>
</dbReference>
<dbReference type="InterPro" id="IPR004154">
    <property type="entry name" value="Anticodon-bd"/>
</dbReference>
<dbReference type="InterPro" id="IPR036621">
    <property type="entry name" value="Anticodon-bd_dom_sf"/>
</dbReference>
<dbReference type="InterPro" id="IPR012675">
    <property type="entry name" value="Beta-grasp_dom_sf"/>
</dbReference>
<dbReference type="InterPro" id="IPR004095">
    <property type="entry name" value="TGS"/>
</dbReference>
<dbReference type="InterPro" id="IPR012676">
    <property type="entry name" value="TGS-like"/>
</dbReference>
<dbReference type="InterPro" id="IPR002320">
    <property type="entry name" value="Thr-tRNA-ligase_IIa"/>
</dbReference>
<dbReference type="InterPro" id="IPR018163">
    <property type="entry name" value="Thr/Ala-tRNA-synth_IIc_edit"/>
</dbReference>
<dbReference type="InterPro" id="IPR047246">
    <property type="entry name" value="ThrRS_anticodon"/>
</dbReference>
<dbReference type="InterPro" id="IPR033728">
    <property type="entry name" value="ThrRS_core"/>
</dbReference>
<dbReference type="InterPro" id="IPR012947">
    <property type="entry name" value="tRNA_SAD"/>
</dbReference>
<dbReference type="NCBIfam" id="TIGR00418">
    <property type="entry name" value="thrS"/>
    <property type="match status" value="1"/>
</dbReference>
<dbReference type="PANTHER" id="PTHR11451:SF44">
    <property type="entry name" value="THREONINE--TRNA LIGASE, CHLOROPLASTIC_MITOCHONDRIAL 2"/>
    <property type="match status" value="1"/>
</dbReference>
<dbReference type="PANTHER" id="PTHR11451">
    <property type="entry name" value="THREONINE-TRNA LIGASE"/>
    <property type="match status" value="1"/>
</dbReference>
<dbReference type="Pfam" id="PF03129">
    <property type="entry name" value="HGTP_anticodon"/>
    <property type="match status" value="1"/>
</dbReference>
<dbReference type="Pfam" id="PF02824">
    <property type="entry name" value="TGS"/>
    <property type="match status" value="1"/>
</dbReference>
<dbReference type="Pfam" id="PF00587">
    <property type="entry name" value="tRNA-synt_2b"/>
    <property type="match status" value="1"/>
</dbReference>
<dbReference type="Pfam" id="PF07973">
    <property type="entry name" value="tRNA_SAD"/>
    <property type="match status" value="1"/>
</dbReference>
<dbReference type="PRINTS" id="PR01047">
    <property type="entry name" value="TRNASYNTHTHR"/>
</dbReference>
<dbReference type="SMART" id="SM00863">
    <property type="entry name" value="tRNA_SAD"/>
    <property type="match status" value="1"/>
</dbReference>
<dbReference type="SUPFAM" id="SSF52954">
    <property type="entry name" value="Class II aaRS ABD-related"/>
    <property type="match status" value="1"/>
</dbReference>
<dbReference type="SUPFAM" id="SSF55681">
    <property type="entry name" value="Class II aaRS and biotin synthetases"/>
    <property type="match status" value="1"/>
</dbReference>
<dbReference type="SUPFAM" id="SSF81271">
    <property type="entry name" value="TGS-like"/>
    <property type="match status" value="1"/>
</dbReference>
<dbReference type="SUPFAM" id="SSF55186">
    <property type="entry name" value="ThrRS/AlaRS common domain"/>
    <property type="match status" value="1"/>
</dbReference>
<dbReference type="PROSITE" id="PS50862">
    <property type="entry name" value="AA_TRNA_LIGASE_II"/>
    <property type="match status" value="1"/>
</dbReference>
<dbReference type="PROSITE" id="PS51880">
    <property type="entry name" value="TGS"/>
    <property type="match status" value="1"/>
</dbReference>
<gene>
    <name evidence="1" type="primary">thrS</name>
    <name type="ordered locus">Gbem_1990</name>
</gene>
<accession>B5EBX9</accession>
<organism>
    <name type="scientific">Citrifermentans bemidjiense (strain ATCC BAA-1014 / DSM 16622 / JCM 12645 / Bem)</name>
    <name type="common">Geobacter bemidjiensis</name>
    <dbReference type="NCBI Taxonomy" id="404380"/>
    <lineage>
        <taxon>Bacteria</taxon>
        <taxon>Pseudomonadati</taxon>
        <taxon>Thermodesulfobacteriota</taxon>
        <taxon>Desulfuromonadia</taxon>
        <taxon>Geobacterales</taxon>
        <taxon>Geobacteraceae</taxon>
        <taxon>Citrifermentans</taxon>
    </lineage>
</organism>
<sequence>MNEINVTLPDGSQRPLPAGASIFDLAASIGAGLAKAAIAGKIDGNLVDLNTPLADGARVEIITEKSPEALEIIRHSTSHLMAQAVKALFPQAKVTIGPAIETGFYYDFDVDHPFTPEDLEKIEEKMRELAKADLKIERKELTSADAIALFKGMGENYKVELIEDLGADKVSLYSQGDFVDLCRGPHLPKTSFIKAFKLTSIAGAYWRGDEKRPMLQRVYGTAFGDKKELEAYLARIEEAKKRDHRKLGRELDLFSFNDEVGAGLVIWHPKGAMLRTILEDFERKEHLKRGYDIVLGPQILKTELWQRSGHYENYRENMYFTTVDEQSYGVKPMNCLAHMMIYRSQLRSYRDLPLRYFELGTVHRHERAGVLHGLLRVRGFTQDDAHILCTPEQLDAEIKGVIQFVTEVMGIFGFEFEMELSTRPEKSIGSDDAWELATNALLNALKDSGRPYEINEGDGAFYGPKIDIKLRDALDRRWQCATIQCDFTLPERFDLTYVDADGEKKRPVMVHRVILGAIERFIGVLIEHFAGNFPTWLAPVQATIVTVTDNQIPYAQAAFDKLRAAGIRVQKDFRNEKLGFKIREAQLQKIPYMLVVGDKEVESGMLAPRFRDGKNLESMTPEQFVSFIESEVKSYK</sequence>
<feature type="chain" id="PRO_1000098575" description="Threonine--tRNA ligase">
    <location>
        <begin position="1"/>
        <end position="636"/>
    </location>
</feature>
<feature type="domain" description="TGS" evidence="2">
    <location>
        <begin position="1"/>
        <end position="63"/>
    </location>
</feature>
<feature type="region of interest" description="Catalytic" evidence="1">
    <location>
        <begin position="243"/>
        <end position="534"/>
    </location>
</feature>
<feature type="binding site" evidence="1">
    <location>
        <position position="335"/>
    </location>
    <ligand>
        <name>Zn(2+)</name>
        <dbReference type="ChEBI" id="CHEBI:29105"/>
    </ligand>
</feature>
<feature type="binding site" evidence="1">
    <location>
        <position position="386"/>
    </location>
    <ligand>
        <name>Zn(2+)</name>
        <dbReference type="ChEBI" id="CHEBI:29105"/>
    </ligand>
</feature>
<feature type="binding site" evidence="1">
    <location>
        <position position="511"/>
    </location>
    <ligand>
        <name>Zn(2+)</name>
        <dbReference type="ChEBI" id="CHEBI:29105"/>
    </ligand>
</feature>
<proteinExistence type="inferred from homology"/>
<name>SYT_CITBB</name>
<keyword id="KW-0030">Aminoacyl-tRNA synthetase</keyword>
<keyword id="KW-0067">ATP-binding</keyword>
<keyword id="KW-0963">Cytoplasm</keyword>
<keyword id="KW-0436">Ligase</keyword>
<keyword id="KW-0479">Metal-binding</keyword>
<keyword id="KW-0547">Nucleotide-binding</keyword>
<keyword id="KW-0648">Protein biosynthesis</keyword>
<keyword id="KW-1185">Reference proteome</keyword>
<keyword id="KW-0694">RNA-binding</keyword>
<keyword id="KW-0820">tRNA-binding</keyword>
<keyword id="KW-0862">Zinc</keyword>